<sequence length="136" mass="15699">MLQPKRFKFRKMHKGKNRGLSCDNKVNFGSYGLKSIERGRLTARQIEAARRTMSRSVKRQGKIWIRVFPDKPITQKPLEVRMGKGKGNVEYWVALIQPGKILYEIDGISEEECRFAFKLASSKLPIKTIFVSKLVL</sequence>
<keyword id="KW-1185">Reference proteome</keyword>
<keyword id="KW-0687">Ribonucleoprotein</keyword>
<keyword id="KW-0689">Ribosomal protein</keyword>
<keyword id="KW-0694">RNA-binding</keyword>
<keyword id="KW-0699">rRNA-binding</keyword>
<keyword id="KW-0820">tRNA-binding</keyword>
<dbReference type="EMBL" id="CP000263">
    <property type="protein sequence ID" value="ABJ90788.1"/>
    <property type="molecule type" value="Genomic_DNA"/>
</dbReference>
<dbReference type="RefSeq" id="WP_011672707.1">
    <property type="nucleotide sequence ID" value="NC_008513.1"/>
</dbReference>
<dbReference type="SMR" id="Q057B1"/>
<dbReference type="STRING" id="372461.BCc_334"/>
<dbReference type="KEGG" id="bcc:BCc_334"/>
<dbReference type="eggNOG" id="COG0197">
    <property type="taxonomic scope" value="Bacteria"/>
</dbReference>
<dbReference type="HOGENOM" id="CLU_078858_2_1_6"/>
<dbReference type="OrthoDB" id="9802589at2"/>
<dbReference type="Proteomes" id="UP000000669">
    <property type="component" value="Chromosome"/>
</dbReference>
<dbReference type="GO" id="GO:0022625">
    <property type="term" value="C:cytosolic large ribosomal subunit"/>
    <property type="evidence" value="ECO:0007669"/>
    <property type="project" value="TreeGrafter"/>
</dbReference>
<dbReference type="GO" id="GO:0019843">
    <property type="term" value="F:rRNA binding"/>
    <property type="evidence" value="ECO:0007669"/>
    <property type="project" value="UniProtKB-UniRule"/>
</dbReference>
<dbReference type="GO" id="GO:0003735">
    <property type="term" value="F:structural constituent of ribosome"/>
    <property type="evidence" value="ECO:0007669"/>
    <property type="project" value="InterPro"/>
</dbReference>
<dbReference type="GO" id="GO:0000049">
    <property type="term" value="F:tRNA binding"/>
    <property type="evidence" value="ECO:0007669"/>
    <property type="project" value="UniProtKB-KW"/>
</dbReference>
<dbReference type="GO" id="GO:0006412">
    <property type="term" value="P:translation"/>
    <property type="evidence" value="ECO:0007669"/>
    <property type="project" value="UniProtKB-UniRule"/>
</dbReference>
<dbReference type="CDD" id="cd01433">
    <property type="entry name" value="Ribosomal_L16_L10e"/>
    <property type="match status" value="1"/>
</dbReference>
<dbReference type="FunFam" id="3.90.1170.10:FF:000001">
    <property type="entry name" value="50S ribosomal protein L16"/>
    <property type="match status" value="1"/>
</dbReference>
<dbReference type="Gene3D" id="3.90.1170.10">
    <property type="entry name" value="Ribosomal protein L10e/L16"/>
    <property type="match status" value="1"/>
</dbReference>
<dbReference type="HAMAP" id="MF_01342">
    <property type="entry name" value="Ribosomal_uL16"/>
    <property type="match status" value="1"/>
</dbReference>
<dbReference type="InterPro" id="IPR047873">
    <property type="entry name" value="Ribosomal_uL16"/>
</dbReference>
<dbReference type="InterPro" id="IPR000114">
    <property type="entry name" value="Ribosomal_uL16_bact-type"/>
</dbReference>
<dbReference type="InterPro" id="IPR020798">
    <property type="entry name" value="Ribosomal_uL16_CS"/>
</dbReference>
<dbReference type="InterPro" id="IPR016180">
    <property type="entry name" value="Ribosomal_uL16_dom"/>
</dbReference>
<dbReference type="InterPro" id="IPR036920">
    <property type="entry name" value="Ribosomal_uL16_sf"/>
</dbReference>
<dbReference type="NCBIfam" id="TIGR01164">
    <property type="entry name" value="rplP_bact"/>
    <property type="match status" value="1"/>
</dbReference>
<dbReference type="PANTHER" id="PTHR12220">
    <property type="entry name" value="50S/60S RIBOSOMAL PROTEIN L16"/>
    <property type="match status" value="1"/>
</dbReference>
<dbReference type="PANTHER" id="PTHR12220:SF13">
    <property type="entry name" value="LARGE RIBOSOMAL SUBUNIT PROTEIN UL16M"/>
    <property type="match status" value="1"/>
</dbReference>
<dbReference type="Pfam" id="PF00252">
    <property type="entry name" value="Ribosomal_L16"/>
    <property type="match status" value="1"/>
</dbReference>
<dbReference type="PRINTS" id="PR00060">
    <property type="entry name" value="RIBOSOMALL16"/>
</dbReference>
<dbReference type="SUPFAM" id="SSF54686">
    <property type="entry name" value="Ribosomal protein L16p/L10e"/>
    <property type="match status" value="1"/>
</dbReference>
<dbReference type="PROSITE" id="PS00586">
    <property type="entry name" value="RIBOSOMAL_L16_1"/>
    <property type="match status" value="1"/>
</dbReference>
<dbReference type="PROSITE" id="PS00701">
    <property type="entry name" value="RIBOSOMAL_L16_2"/>
    <property type="match status" value="1"/>
</dbReference>
<name>RL16_BUCCC</name>
<accession>Q057B1</accession>
<feature type="chain" id="PRO_1000054586" description="Large ribosomal subunit protein uL16">
    <location>
        <begin position="1"/>
        <end position="136"/>
    </location>
</feature>
<organism>
    <name type="scientific">Buchnera aphidicola subsp. Cinara cedri (strain Cc)</name>
    <dbReference type="NCBI Taxonomy" id="372461"/>
    <lineage>
        <taxon>Bacteria</taxon>
        <taxon>Pseudomonadati</taxon>
        <taxon>Pseudomonadota</taxon>
        <taxon>Gammaproteobacteria</taxon>
        <taxon>Enterobacterales</taxon>
        <taxon>Erwiniaceae</taxon>
        <taxon>Buchnera</taxon>
    </lineage>
</organism>
<proteinExistence type="inferred from homology"/>
<comment type="function">
    <text evidence="1">Binds 23S rRNA and is also seen to make contacts with the A and possibly P site tRNAs.</text>
</comment>
<comment type="subunit">
    <text evidence="1">Part of the 50S ribosomal subunit.</text>
</comment>
<comment type="similarity">
    <text evidence="1">Belongs to the universal ribosomal protein uL16 family.</text>
</comment>
<evidence type="ECO:0000255" key="1">
    <source>
        <dbReference type="HAMAP-Rule" id="MF_01342"/>
    </source>
</evidence>
<evidence type="ECO:0000305" key="2"/>
<protein>
    <recommendedName>
        <fullName evidence="1">Large ribosomal subunit protein uL16</fullName>
    </recommendedName>
    <alternativeName>
        <fullName evidence="2">50S ribosomal protein L16</fullName>
    </alternativeName>
</protein>
<reference key="1">
    <citation type="journal article" date="2006" name="Science">
        <title>A small microbial genome: the end of a long symbiotic relationship?</title>
        <authorList>
            <person name="Perez-Brocal V."/>
            <person name="Gil R."/>
            <person name="Ramos S."/>
            <person name="Lamelas A."/>
            <person name="Postigo M."/>
            <person name="Michelena J.M."/>
            <person name="Silva F.J."/>
            <person name="Moya A."/>
            <person name="Latorre A."/>
        </authorList>
    </citation>
    <scope>NUCLEOTIDE SEQUENCE [LARGE SCALE GENOMIC DNA]</scope>
    <source>
        <strain>Cc</strain>
    </source>
</reference>
<gene>
    <name evidence="1" type="primary">rplP</name>
    <name type="ordered locus">BCc_334</name>
</gene>